<accession>O14259</accession>
<sequence>MNSFSSNEYSTEISTEALNNWQQLVEQRISLELEYAAKLAKLTKSIKAIKQCAPLNDLTKQVCVELMQCNKKHLEASRYFQTHVKEFMKEYVDRENKFSNETISKSSAAALMTSMENFILFTNPVYHNKLQVPSKSDMEIANSLKITQPAEKNSGTANPISAYSLEHAELDERNNQLSEALSMLRLSPFVNNYYPSYQNRKDGKSLMENRGVVLSVDTVTSPISQSPKKLTPTTSPINSTSLSFVDAKKPGSKWPSQYDFPKKTKSTEIPFKTLPSLNINNERELTKHKLPIVKPKLAVFPSNQATASTLQLAPPPVQAIPTLRNPVNLDDKKESLLKYYATHPTITPDGFPIFAYVRALYAYKATLPSEIDLNVDDTLVVLNRQKDGWWKGLVVSPTVGRIGLFPSNYIEELEY</sequence>
<gene>
    <name type="primary">sfp47</name>
    <name type="ORF">SPAC7D4.02c</name>
</gene>
<organism>
    <name type="scientific">Schizosaccharomyces pombe (strain 972 / ATCC 24843)</name>
    <name type="common">Fission yeast</name>
    <dbReference type="NCBI Taxonomy" id="284812"/>
    <lineage>
        <taxon>Eukaryota</taxon>
        <taxon>Fungi</taxon>
        <taxon>Dikarya</taxon>
        <taxon>Ascomycota</taxon>
        <taxon>Taphrinomycotina</taxon>
        <taxon>Schizosaccharomycetes</taxon>
        <taxon>Schizosaccharomycetales</taxon>
        <taxon>Schizosaccharomycetaceae</taxon>
        <taxon>Schizosaccharomyces</taxon>
    </lineage>
</organism>
<comment type="function">
    <text evidence="4">Required for the regulation of activity and recruitment of ubp4 to endosomes.</text>
</comment>
<comment type="subunit">
    <text evidence="4">Interacts with ubp4.</text>
</comment>
<comment type="subcellular location">
    <subcellularLocation>
        <location evidence="2 4">Cytoplasm</location>
    </subcellularLocation>
    <subcellularLocation>
        <location evidence="4">Endosome</location>
    </subcellularLocation>
</comment>
<protein>
    <recommendedName>
        <fullName>Ubp4-interactor sfp47</fullName>
    </recommendedName>
</protein>
<name>SFP47_SCHPO</name>
<feature type="chain" id="PRO_0000303943" description="Ubp4-interactor sfp47">
    <location>
        <begin position="1"/>
        <end position="415"/>
    </location>
</feature>
<feature type="domain" description="SH3" evidence="1">
    <location>
        <begin position="352"/>
        <end position="415"/>
    </location>
</feature>
<feature type="modified residue" description="Phosphoserine" evidence="3">
    <location>
        <position position="221"/>
    </location>
</feature>
<feature type="modified residue" description="Phosphoserine" evidence="3">
    <location>
        <position position="226"/>
    </location>
</feature>
<feature type="modified residue" description="Phosphothreonine" evidence="3">
    <location>
        <position position="231"/>
    </location>
</feature>
<feature type="modified residue" description="Phosphoserine" evidence="3">
    <location>
        <position position="235"/>
    </location>
</feature>
<evidence type="ECO:0000255" key="1">
    <source>
        <dbReference type="PROSITE-ProRule" id="PRU00192"/>
    </source>
</evidence>
<evidence type="ECO:0000269" key="2">
    <source>
    </source>
</evidence>
<evidence type="ECO:0000269" key="3">
    <source>
    </source>
</evidence>
<evidence type="ECO:0000269" key="4">
    <source>
    </source>
</evidence>
<keyword id="KW-0963">Cytoplasm</keyword>
<keyword id="KW-0967">Endosome</keyword>
<keyword id="KW-0597">Phosphoprotein</keyword>
<keyword id="KW-1185">Reference proteome</keyword>
<keyword id="KW-0728">SH3 domain</keyword>
<keyword id="KW-0833">Ubl conjugation pathway</keyword>
<dbReference type="EMBL" id="CU329670">
    <property type="protein sequence ID" value="CAB16719.2"/>
    <property type="molecule type" value="Genomic_DNA"/>
</dbReference>
<dbReference type="PIR" id="T39080">
    <property type="entry name" value="T39080"/>
</dbReference>
<dbReference type="RefSeq" id="NP_593857.1">
    <property type="nucleotide sequence ID" value="NM_001019286.2"/>
</dbReference>
<dbReference type="BioGRID" id="278568">
    <property type="interactions" value="8"/>
</dbReference>
<dbReference type="FunCoup" id="O14259">
    <property type="interactions" value="419"/>
</dbReference>
<dbReference type="STRING" id="284812.O14259"/>
<dbReference type="iPTMnet" id="O14259"/>
<dbReference type="PaxDb" id="4896-SPAC7D4.02c.1"/>
<dbReference type="EnsemblFungi" id="SPAC7D4.02c.1">
    <property type="protein sequence ID" value="SPAC7D4.02c.1:pep"/>
    <property type="gene ID" value="SPAC7D4.02c"/>
</dbReference>
<dbReference type="GeneID" id="2542091"/>
<dbReference type="KEGG" id="spo:2542091"/>
<dbReference type="PomBase" id="SPAC7D4.02c">
    <property type="gene designation" value="sfp47"/>
</dbReference>
<dbReference type="VEuPathDB" id="FungiDB:SPAC7D4.02c"/>
<dbReference type="HOGENOM" id="CLU_662505_0_0_1"/>
<dbReference type="InParanoid" id="O14259"/>
<dbReference type="OMA" id="QKDGWWK"/>
<dbReference type="Reactome" id="R-SPO-6798695">
    <property type="pathway name" value="Neutrophil degranulation"/>
</dbReference>
<dbReference type="Reactome" id="R-SPO-9013424">
    <property type="pathway name" value="RHOV GTPase cycle"/>
</dbReference>
<dbReference type="Reactome" id="R-SPO-983168">
    <property type="pathway name" value="Antigen processing: Ubiquitination &amp; Proteasome degradation"/>
</dbReference>
<dbReference type="PRO" id="PR:O14259"/>
<dbReference type="Proteomes" id="UP000002485">
    <property type="component" value="Chromosome I"/>
</dbReference>
<dbReference type="GO" id="GO:0005737">
    <property type="term" value="C:cytoplasm"/>
    <property type="evidence" value="ECO:0007005"/>
    <property type="project" value="PomBase"/>
</dbReference>
<dbReference type="GO" id="GO:0005829">
    <property type="term" value="C:cytosol"/>
    <property type="evidence" value="ECO:0007005"/>
    <property type="project" value="PomBase"/>
</dbReference>
<dbReference type="GO" id="GO:0005768">
    <property type="term" value="C:endosome"/>
    <property type="evidence" value="ECO:0000353"/>
    <property type="project" value="PomBase"/>
</dbReference>
<dbReference type="GO" id="GO:0030414">
    <property type="term" value="F:peptidase inhibitor activity"/>
    <property type="evidence" value="ECO:0000269"/>
    <property type="project" value="PomBase"/>
</dbReference>
<dbReference type="GO" id="GO:0006511">
    <property type="term" value="P:ubiquitin-dependent protein catabolic process"/>
    <property type="evidence" value="ECO:0000353"/>
    <property type="project" value="PomBase"/>
</dbReference>
<dbReference type="CDD" id="cd00174">
    <property type="entry name" value="SH3"/>
    <property type="match status" value="1"/>
</dbReference>
<dbReference type="Gene3D" id="1.20.1270.60">
    <property type="entry name" value="Arfaptin homology (AH) domain/BAR domain"/>
    <property type="match status" value="1"/>
</dbReference>
<dbReference type="Gene3D" id="2.30.30.40">
    <property type="entry name" value="SH3 Domains"/>
    <property type="match status" value="1"/>
</dbReference>
<dbReference type="InterPro" id="IPR027267">
    <property type="entry name" value="AH/BAR_dom_sf"/>
</dbReference>
<dbReference type="InterPro" id="IPR036028">
    <property type="entry name" value="SH3-like_dom_sf"/>
</dbReference>
<dbReference type="InterPro" id="IPR001452">
    <property type="entry name" value="SH3_domain"/>
</dbReference>
<dbReference type="PANTHER" id="PTHR23065:SF7">
    <property type="entry name" value="NOSTRIN, ISOFORM H"/>
    <property type="match status" value="1"/>
</dbReference>
<dbReference type="PANTHER" id="PTHR23065">
    <property type="entry name" value="PROLINE-SERINE-THREONINE PHOSPHATASE INTERACTING PROTEIN 1"/>
    <property type="match status" value="1"/>
</dbReference>
<dbReference type="Pfam" id="PF00018">
    <property type="entry name" value="SH3_1"/>
    <property type="match status" value="1"/>
</dbReference>
<dbReference type="PRINTS" id="PR00452">
    <property type="entry name" value="SH3DOMAIN"/>
</dbReference>
<dbReference type="SMART" id="SM00326">
    <property type="entry name" value="SH3"/>
    <property type="match status" value="1"/>
</dbReference>
<dbReference type="SUPFAM" id="SSF103657">
    <property type="entry name" value="BAR/IMD domain-like"/>
    <property type="match status" value="1"/>
</dbReference>
<dbReference type="SUPFAM" id="SSF50044">
    <property type="entry name" value="SH3-domain"/>
    <property type="match status" value="1"/>
</dbReference>
<dbReference type="PROSITE" id="PS50002">
    <property type="entry name" value="SH3"/>
    <property type="match status" value="1"/>
</dbReference>
<proteinExistence type="evidence at protein level"/>
<reference key="1">
    <citation type="journal article" date="2002" name="Nature">
        <title>The genome sequence of Schizosaccharomyces pombe.</title>
        <authorList>
            <person name="Wood V."/>
            <person name="Gwilliam R."/>
            <person name="Rajandream M.A."/>
            <person name="Lyne M.H."/>
            <person name="Lyne R."/>
            <person name="Stewart A."/>
            <person name="Sgouros J.G."/>
            <person name="Peat N."/>
            <person name="Hayles J."/>
            <person name="Baker S.G."/>
            <person name="Basham D."/>
            <person name="Bowman S."/>
            <person name="Brooks K."/>
            <person name="Brown D."/>
            <person name="Brown S."/>
            <person name="Chillingworth T."/>
            <person name="Churcher C.M."/>
            <person name="Collins M."/>
            <person name="Connor R."/>
            <person name="Cronin A."/>
            <person name="Davis P."/>
            <person name="Feltwell T."/>
            <person name="Fraser A."/>
            <person name="Gentles S."/>
            <person name="Goble A."/>
            <person name="Hamlin N."/>
            <person name="Harris D.E."/>
            <person name="Hidalgo J."/>
            <person name="Hodgson G."/>
            <person name="Holroyd S."/>
            <person name="Hornsby T."/>
            <person name="Howarth S."/>
            <person name="Huckle E.J."/>
            <person name="Hunt S."/>
            <person name="Jagels K."/>
            <person name="James K.D."/>
            <person name="Jones L."/>
            <person name="Jones M."/>
            <person name="Leather S."/>
            <person name="McDonald S."/>
            <person name="McLean J."/>
            <person name="Mooney P."/>
            <person name="Moule S."/>
            <person name="Mungall K.L."/>
            <person name="Murphy L.D."/>
            <person name="Niblett D."/>
            <person name="Odell C."/>
            <person name="Oliver K."/>
            <person name="O'Neil S."/>
            <person name="Pearson D."/>
            <person name="Quail M.A."/>
            <person name="Rabbinowitsch E."/>
            <person name="Rutherford K.M."/>
            <person name="Rutter S."/>
            <person name="Saunders D."/>
            <person name="Seeger K."/>
            <person name="Sharp S."/>
            <person name="Skelton J."/>
            <person name="Simmonds M.N."/>
            <person name="Squares R."/>
            <person name="Squares S."/>
            <person name="Stevens K."/>
            <person name="Taylor K."/>
            <person name="Taylor R.G."/>
            <person name="Tivey A."/>
            <person name="Walsh S.V."/>
            <person name="Warren T."/>
            <person name="Whitehead S."/>
            <person name="Woodward J.R."/>
            <person name="Volckaert G."/>
            <person name="Aert R."/>
            <person name="Robben J."/>
            <person name="Grymonprez B."/>
            <person name="Weltjens I."/>
            <person name="Vanstreels E."/>
            <person name="Rieger M."/>
            <person name="Schaefer M."/>
            <person name="Mueller-Auer S."/>
            <person name="Gabel C."/>
            <person name="Fuchs M."/>
            <person name="Duesterhoeft A."/>
            <person name="Fritzc C."/>
            <person name="Holzer E."/>
            <person name="Moestl D."/>
            <person name="Hilbert H."/>
            <person name="Borzym K."/>
            <person name="Langer I."/>
            <person name="Beck A."/>
            <person name="Lehrach H."/>
            <person name="Reinhardt R."/>
            <person name="Pohl T.M."/>
            <person name="Eger P."/>
            <person name="Zimmermann W."/>
            <person name="Wedler H."/>
            <person name="Wambutt R."/>
            <person name="Purnelle B."/>
            <person name="Goffeau A."/>
            <person name="Cadieu E."/>
            <person name="Dreano S."/>
            <person name="Gloux S."/>
            <person name="Lelaure V."/>
            <person name="Mottier S."/>
            <person name="Galibert F."/>
            <person name="Aves S.J."/>
            <person name="Xiang Z."/>
            <person name="Hunt C."/>
            <person name="Moore K."/>
            <person name="Hurst S.M."/>
            <person name="Lucas M."/>
            <person name="Rochet M."/>
            <person name="Gaillardin C."/>
            <person name="Tallada V.A."/>
            <person name="Garzon A."/>
            <person name="Thode G."/>
            <person name="Daga R.R."/>
            <person name="Cruzado L."/>
            <person name="Jimenez J."/>
            <person name="Sanchez M."/>
            <person name="del Rey F."/>
            <person name="Benito J."/>
            <person name="Dominguez A."/>
            <person name="Revuelta J.L."/>
            <person name="Moreno S."/>
            <person name="Armstrong J."/>
            <person name="Forsburg S.L."/>
            <person name="Cerutti L."/>
            <person name="Lowe T."/>
            <person name="McCombie W.R."/>
            <person name="Paulsen I."/>
            <person name="Potashkin J."/>
            <person name="Shpakovski G.V."/>
            <person name="Ussery D."/>
            <person name="Barrell B.G."/>
            <person name="Nurse P."/>
        </authorList>
    </citation>
    <scope>NUCLEOTIDE SEQUENCE [LARGE SCALE GENOMIC DNA]</scope>
    <source>
        <strain>972 / ATCC 24843</strain>
    </source>
</reference>
<reference key="2">
    <citation type="journal article" date="2006" name="Nat. Biotechnol.">
        <title>ORFeome cloning and global analysis of protein localization in the fission yeast Schizosaccharomyces pombe.</title>
        <authorList>
            <person name="Matsuyama A."/>
            <person name="Arai R."/>
            <person name="Yashiroda Y."/>
            <person name="Shirai A."/>
            <person name="Kamata A."/>
            <person name="Sekido S."/>
            <person name="Kobayashi Y."/>
            <person name="Hashimoto A."/>
            <person name="Hamamoto M."/>
            <person name="Hiraoka Y."/>
            <person name="Horinouchi S."/>
            <person name="Yoshida M."/>
        </authorList>
    </citation>
    <scope>SUBCELLULAR LOCATION [LARGE SCALE ANALYSIS]</scope>
</reference>
<reference key="3">
    <citation type="journal article" date="2008" name="J. Proteome Res.">
        <title>Phosphoproteome analysis of fission yeast.</title>
        <authorList>
            <person name="Wilson-Grady J.T."/>
            <person name="Villen J."/>
            <person name="Gygi S.P."/>
        </authorList>
    </citation>
    <scope>PHOSPHORYLATION [LARGE SCALE ANALYSIS] AT SER-221; SER-226; THR-231 AND SER-235</scope>
    <scope>IDENTIFICATION BY MASS SPECTROMETRY</scope>
</reference>
<reference key="4">
    <citation type="journal article" date="2010" name="PLoS Biol.">
        <title>A global census of fission yeast deubiquitinating enzyme localization and interaction networks reveals distinct compartmentalization profiles and overlapping functions in endocytosis and polarity.</title>
        <authorList>
            <person name="Kouranti I."/>
            <person name="McLean J.R."/>
            <person name="Feoktistova A."/>
            <person name="Liang P."/>
            <person name="Johnson A.E."/>
            <person name="Roberts-Galbraith R.H."/>
            <person name="Gould K.L."/>
        </authorList>
    </citation>
    <scope>INTERACTION WITH UBP4</scope>
    <scope>IDENTIFICATION BY MASS SPECTROMETRY</scope>
    <scope>SUBCELLULAR LOCATION</scope>
    <scope>FUNCTION</scope>
</reference>